<dbReference type="EMBL" id="U24160">
    <property type="protein sequence ID" value="AAC52827.1"/>
    <property type="molecule type" value="mRNA"/>
</dbReference>
<dbReference type="EMBL" id="AK146822">
    <property type="protein sequence ID" value="BAE27460.1"/>
    <property type="molecule type" value="mRNA"/>
</dbReference>
<dbReference type="EMBL" id="AK159895">
    <property type="protein sequence ID" value="BAE35461.1"/>
    <property type="molecule type" value="mRNA"/>
</dbReference>
<dbReference type="EMBL" id="AK168376">
    <property type="protein sequence ID" value="BAE40307.1"/>
    <property type="molecule type" value="mRNA"/>
</dbReference>
<dbReference type="EMBL" id="AL596185">
    <property type="status" value="NOT_ANNOTATED_CDS"/>
    <property type="molecule type" value="Genomic_DNA"/>
</dbReference>
<dbReference type="EMBL" id="CH466596">
    <property type="protein sequence ID" value="EDL12520.1"/>
    <property type="molecule type" value="Genomic_DNA"/>
</dbReference>
<dbReference type="EMBL" id="BC053050">
    <property type="protein sequence ID" value="AAH53050.1"/>
    <property type="molecule type" value="mRNA"/>
</dbReference>
<dbReference type="CCDS" id="CCDS24930.1"/>
<dbReference type="RefSeq" id="NP_031914.3">
    <property type="nucleotide sequence ID" value="NM_007888.4"/>
</dbReference>
<dbReference type="PDB" id="3ML6">
    <property type="method" value="X-ray"/>
    <property type="resolution" value="3.50 A"/>
    <property type="chains" value="A/B/C/D/E/F=417-510"/>
</dbReference>
<dbReference type="PDB" id="6VCC">
    <property type="method" value="EM"/>
    <property type="resolution" value="3.60 A"/>
    <property type="chains" value="A/B/C/D/E/F/G/H/I/J/K/L=12-92"/>
</dbReference>
<dbReference type="PDBsum" id="3ML6"/>
<dbReference type="PDBsum" id="6VCC"/>
<dbReference type="BMRB" id="Q60838"/>
<dbReference type="EMDB" id="EMD-21148"/>
<dbReference type="SMR" id="Q60838"/>
<dbReference type="BioGRID" id="199343">
    <property type="interactions" value="29"/>
</dbReference>
<dbReference type="CORUM" id="Q60838"/>
<dbReference type="DIP" id="DIP-29399N"/>
<dbReference type="FunCoup" id="Q60838">
    <property type="interactions" value="4568"/>
</dbReference>
<dbReference type="IntAct" id="Q60838">
    <property type="interactions" value="32"/>
</dbReference>
<dbReference type="MINT" id="Q60838"/>
<dbReference type="STRING" id="10090.ENSMUSP00000140073"/>
<dbReference type="iPTMnet" id="Q60838"/>
<dbReference type="PhosphoSitePlus" id="Q60838"/>
<dbReference type="PaxDb" id="10090-ENSMUSP00000019362"/>
<dbReference type="ProteomicsDB" id="277616"/>
<dbReference type="Pumba" id="Q60838"/>
<dbReference type="Antibodypedia" id="3985">
    <property type="antibodies" value="492 antibodies from 39 providers"/>
</dbReference>
<dbReference type="DNASU" id="13543"/>
<dbReference type="Ensembl" id="ENSMUST00000019362.15">
    <property type="protein sequence ID" value="ENSMUSP00000019362.9"/>
    <property type="gene ID" value="ENSMUSG00000020888.17"/>
</dbReference>
<dbReference type="Ensembl" id="ENSMUST00000102575.9">
    <property type="protein sequence ID" value="ENSMUSP00000099635.3"/>
    <property type="gene ID" value="ENSMUSG00000020888.17"/>
</dbReference>
<dbReference type="Ensembl" id="ENSMUST00000190940.2">
    <property type="protein sequence ID" value="ENSMUSP00000140073.2"/>
    <property type="gene ID" value="ENSMUSG00000020888.17"/>
</dbReference>
<dbReference type="GeneID" id="13543"/>
<dbReference type="KEGG" id="mmu:13543"/>
<dbReference type="UCSC" id="uc007jtm.1">
    <property type="organism name" value="mouse"/>
</dbReference>
<dbReference type="AGR" id="MGI:106613"/>
<dbReference type="CTD" id="1856"/>
<dbReference type="MGI" id="MGI:106613">
    <property type="gene designation" value="Dvl2"/>
</dbReference>
<dbReference type="VEuPathDB" id="HostDB:ENSMUSG00000020888"/>
<dbReference type="eggNOG" id="KOG3571">
    <property type="taxonomic scope" value="Eukaryota"/>
</dbReference>
<dbReference type="GeneTree" id="ENSGT00950000182903"/>
<dbReference type="HOGENOM" id="CLU_012601_1_0_1"/>
<dbReference type="InParanoid" id="Q60838"/>
<dbReference type="OMA" id="CENYLVN"/>
<dbReference type="OrthoDB" id="10031689at2759"/>
<dbReference type="PhylomeDB" id="Q60838"/>
<dbReference type="TreeFam" id="TF318198"/>
<dbReference type="Reactome" id="R-MMU-201688">
    <property type="pathway name" value="WNT mediated activation of DVL"/>
</dbReference>
<dbReference type="Reactome" id="R-MMU-2028269">
    <property type="pathway name" value="Signaling by Hippo"/>
</dbReference>
<dbReference type="Reactome" id="R-MMU-4086400">
    <property type="pathway name" value="PCP/CE pathway"/>
</dbReference>
<dbReference type="Reactome" id="R-MMU-4608870">
    <property type="pathway name" value="Asymmetric localization of PCP proteins"/>
</dbReference>
<dbReference type="Reactome" id="R-MMU-4641258">
    <property type="pathway name" value="Degradation of DVL"/>
</dbReference>
<dbReference type="Reactome" id="R-MMU-4641262">
    <property type="pathway name" value="Disassembly of the destruction complex and recruitment of AXIN to the membrane"/>
</dbReference>
<dbReference type="Reactome" id="R-MMU-5099900">
    <property type="pathway name" value="WNT5A-dependent internalization of FZD4"/>
</dbReference>
<dbReference type="Reactome" id="R-MMU-5663220">
    <property type="pathway name" value="RHO GTPases Activate Formins"/>
</dbReference>
<dbReference type="Reactome" id="R-MMU-8856825">
    <property type="pathway name" value="Cargo recognition for clathrin-mediated endocytosis"/>
</dbReference>
<dbReference type="Reactome" id="R-MMU-8856828">
    <property type="pathway name" value="Clathrin-mediated endocytosis"/>
</dbReference>
<dbReference type="BioGRID-ORCS" id="13543">
    <property type="hits" value="0 hits in 60 CRISPR screens"/>
</dbReference>
<dbReference type="ChiTaRS" id="Dvl2">
    <property type="organism name" value="mouse"/>
</dbReference>
<dbReference type="PRO" id="PR:Q60838"/>
<dbReference type="Proteomes" id="UP000000589">
    <property type="component" value="Chromosome 11"/>
</dbReference>
<dbReference type="RNAct" id="Q60838">
    <property type="molecule type" value="protein"/>
</dbReference>
<dbReference type="Bgee" id="ENSMUSG00000020888">
    <property type="expression patterns" value="Expressed in embryonic brain and 159 other cell types or tissues"/>
</dbReference>
<dbReference type="GO" id="GO:0016235">
    <property type="term" value="C:aggresome"/>
    <property type="evidence" value="ECO:0007669"/>
    <property type="project" value="Ensembl"/>
</dbReference>
<dbReference type="GO" id="GO:0045177">
    <property type="term" value="C:apical part of cell"/>
    <property type="evidence" value="ECO:0000314"/>
    <property type="project" value="MGI"/>
</dbReference>
<dbReference type="GO" id="GO:0005938">
    <property type="term" value="C:cell cortex"/>
    <property type="evidence" value="ECO:0000266"/>
    <property type="project" value="MGI"/>
</dbReference>
<dbReference type="GO" id="GO:0030136">
    <property type="term" value="C:clathrin-coated vesicle"/>
    <property type="evidence" value="ECO:0000314"/>
    <property type="project" value="MGI"/>
</dbReference>
<dbReference type="GO" id="GO:0005737">
    <property type="term" value="C:cytoplasm"/>
    <property type="evidence" value="ECO:0000314"/>
    <property type="project" value="UniProtKB"/>
</dbReference>
<dbReference type="GO" id="GO:0031410">
    <property type="term" value="C:cytoplasmic vesicle"/>
    <property type="evidence" value="ECO:0000266"/>
    <property type="project" value="MGI"/>
</dbReference>
<dbReference type="GO" id="GO:0005856">
    <property type="term" value="C:cytoskeleton"/>
    <property type="evidence" value="ECO:0000303"/>
    <property type="project" value="BHF-UCL"/>
</dbReference>
<dbReference type="GO" id="GO:0005829">
    <property type="term" value="C:cytosol"/>
    <property type="evidence" value="ECO:0000314"/>
    <property type="project" value="UniProtKB"/>
</dbReference>
<dbReference type="GO" id="GO:0016328">
    <property type="term" value="C:lateral plasma membrane"/>
    <property type="evidence" value="ECO:0000314"/>
    <property type="project" value="MGI"/>
</dbReference>
<dbReference type="GO" id="GO:0016604">
    <property type="term" value="C:nuclear body"/>
    <property type="evidence" value="ECO:0007669"/>
    <property type="project" value="Ensembl"/>
</dbReference>
<dbReference type="GO" id="GO:0005634">
    <property type="term" value="C:nucleus"/>
    <property type="evidence" value="ECO:0000315"/>
    <property type="project" value="UniProtKB"/>
</dbReference>
<dbReference type="GO" id="GO:0005886">
    <property type="term" value="C:plasma membrane"/>
    <property type="evidence" value="ECO:0000314"/>
    <property type="project" value="UniProtKB"/>
</dbReference>
<dbReference type="GO" id="GO:0005109">
    <property type="term" value="F:frizzled binding"/>
    <property type="evidence" value="ECO:0000353"/>
    <property type="project" value="UniProtKB"/>
</dbReference>
<dbReference type="GO" id="GO:0042802">
    <property type="term" value="F:identical protein binding"/>
    <property type="evidence" value="ECO:0000353"/>
    <property type="project" value="IntAct"/>
</dbReference>
<dbReference type="GO" id="GO:0019904">
    <property type="term" value="F:protein domain specific binding"/>
    <property type="evidence" value="ECO:0000353"/>
    <property type="project" value="MGI"/>
</dbReference>
<dbReference type="GO" id="GO:0019901">
    <property type="term" value="F:protein kinase binding"/>
    <property type="evidence" value="ECO:0000353"/>
    <property type="project" value="ParkinsonsUK-UCL"/>
</dbReference>
<dbReference type="GO" id="GO:0030674">
    <property type="term" value="F:protein-macromolecule adaptor activity"/>
    <property type="evidence" value="ECO:0000314"/>
    <property type="project" value="ParkinsonsUK-UCL"/>
</dbReference>
<dbReference type="GO" id="GO:0031267">
    <property type="term" value="F:small GTPase binding"/>
    <property type="evidence" value="ECO:0000353"/>
    <property type="project" value="ParkinsonsUK-UCL"/>
</dbReference>
<dbReference type="GO" id="GO:0060070">
    <property type="term" value="P:canonical Wnt signaling pathway"/>
    <property type="evidence" value="ECO:0000314"/>
    <property type="project" value="ParkinsonsUK-UCL"/>
</dbReference>
<dbReference type="GO" id="GO:0090103">
    <property type="term" value="P:cochlea morphogenesis"/>
    <property type="evidence" value="ECO:0000316"/>
    <property type="project" value="MGI"/>
</dbReference>
<dbReference type="GO" id="GO:0022007">
    <property type="term" value="P:convergent extension involved in neural plate elongation"/>
    <property type="evidence" value="ECO:0000315"/>
    <property type="project" value="MGI"/>
</dbReference>
<dbReference type="GO" id="GO:0060029">
    <property type="term" value="P:convergent extension involved in organogenesis"/>
    <property type="evidence" value="ECO:0000316"/>
    <property type="project" value="MGI"/>
</dbReference>
<dbReference type="GO" id="GO:0007507">
    <property type="term" value="P:heart development"/>
    <property type="evidence" value="ECO:0000315"/>
    <property type="project" value="MGI"/>
</dbReference>
<dbReference type="GO" id="GO:0001947">
    <property type="term" value="P:heart looping"/>
    <property type="evidence" value="ECO:0000316"/>
    <property type="project" value="BHF-UCL"/>
</dbReference>
<dbReference type="GO" id="GO:0003007">
    <property type="term" value="P:heart morphogenesis"/>
    <property type="evidence" value="ECO:0000316"/>
    <property type="project" value="MGI"/>
</dbReference>
<dbReference type="GO" id="GO:0035556">
    <property type="term" value="P:intracellular signal transduction"/>
    <property type="evidence" value="ECO:0007669"/>
    <property type="project" value="InterPro"/>
</dbReference>
<dbReference type="GO" id="GO:0001843">
    <property type="term" value="P:neural tube closure"/>
    <property type="evidence" value="ECO:0000315"/>
    <property type="project" value="MGI"/>
</dbReference>
<dbReference type="GO" id="GO:0035567">
    <property type="term" value="P:non-canonical Wnt signaling pathway"/>
    <property type="evidence" value="ECO:0000314"/>
    <property type="project" value="ParkinsonsUK-UCL"/>
</dbReference>
<dbReference type="GO" id="GO:0003151">
    <property type="term" value="P:outflow tract morphogenesis"/>
    <property type="evidence" value="ECO:0000315"/>
    <property type="project" value="BHF-UCL"/>
</dbReference>
<dbReference type="GO" id="GO:0043547">
    <property type="term" value="P:positive regulation of GTPase activity"/>
    <property type="evidence" value="ECO:0000314"/>
    <property type="project" value="ParkinsonsUK-UCL"/>
</dbReference>
<dbReference type="GO" id="GO:0046330">
    <property type="term" value="P:positive regulation of JNK cascade"/>
    <property type="evidence" value="ECO:0000314"/>
    <property type="project" value="BHF-UCL"/>
</dbReference>
<dbReference type="GO" id="GO:0150012">
    <property type="term" value="P:positive regulation of neuron projection arborization"/>
    <property type="evidence" value="ECO:0007669"/>
    <property type="project" value="Ensembl"/>
</dbReference>
<dbReference type="GO" id="GO:1901798">
    <property type="term" value="P:positive regulation of signal transduction by p53 class mediator"/>
    <property type="evidence" value="ECO:0007669"/>
    <property type="project" value="Ensembl"/>
</dbReference>
<dbReference type="GO" id="GO:0045944">
    <property type="term" value="P:positive regulation of transcription by RNA polymerase II"/>
    <property type="evidence" value="ECO:0007669"/>
    <property type="project" value="Ensembl"/>
</dbReference>
<dbReference type="GO" id="GO:0008104">
    <property type="term" value="P:protein localization"/>
    <property type="evidence" value="ECO:0000314"/>
    <property type="project" value="MGI"/>
</dbReference>
<dbReference type="GO" id="GO:0042127">
    <property type="term" value="P:regulation of cell population proliferation"/>
    <property type="evidence" value="ECO:0007669"/>
    <property type="project" value="Ensembl"/>
</dbReference>
<dbReference type="GO" id="GO:0007379">
    <property type="term" value="P:segment specification"/>
    <property type="evidence" value="ECO:0000315"/>
    <property type="project" value="MGI"/>
</dbReference>
<dbReference type="GO" id="GO:0035282">
    <property type="term" value="P:segmentation"/>
    <property type="evidence" value="ECO:0000316"/>
    <property type="project" value="BHF-UCL"/>
</dbReference>
<dbReference type="GO" id="GO:0016055">
    <property type="term" value="P:Wnt signaling pathway"/>
    <property type="evidence" value="ECO:0000315"/>
    <property type="project" value="MGI"/>
</dbReference>
<dbReference type="GO" id="GO:0060071">
    <property type="term" value="P:Wnt signaling pathway, planar cell polarity pathway"/>
    <property type="evidence" value="ECO:0000316"/>
    <property type="project" value="MGI"/>
</dbReference>
<dbReference type="CDD" id="cd04438">
    <property type="entry name" value="DEP_dishevelled"/>
    <property type="match status" value="1"/>
</dbReference>
<dbReference type="CDD" id="cd06717">
    <property type="entry name" value="PDZ_Dishevelled-like"/>
    <property type="match status" value="1"/>
</dbReference>
<dbReference type="FunFam" id="2.40.240.130:FF:000001">
    <property type="entry name" value="Segment polarity protein dishevelled homolog DVL-1"/>
    <property type="match status" value="1"/>
</dbReference>
<dbReference type="FunFam" id="2.30.42.10:FF:000014">
    <property type="entry name" value="Segment polarity protein dishevelled homolog DVL-3"/>
    <property type="match status" value="1"/>
</dbReference>
<dbReference type="FunFam" id="1.10.10.10:FF:000040">
    <property type="entry name" value="segment polarity protein dishevelled homolog DVL-3"/>
    <property type="match status" value="1"/>
</dbReference>
<dbReference type="Gene3D" id="2.30.42.10">
    <property type="match status" value="1"/>
</dbReference>
<dbReference type="Gene3D" id="2.40.240.130">
    <property type="match status" value="1"/>
</dbReference>
<dbReference type="Gene3D" id="1.10.10.10">
    <property type="entry name" value="Winged helix-like DNA-binding domain superfamily/Winged helix DNA-binding domain"/>
    <property type="match status" value="1"/>
</dbReference>
<dbReference type="IDEAL" id="IID50127"/>
<dbReference type="InterPro" id="IPR000591">
    <property type="entry name" value="DEP_dom"/>
</dbReference>
<dbReference type="InterPro" id="IPR024580">
    <property type="entry name" value="Dishevelled_C-dom"/>
</dbReference>
<dbReference type="InterPro" id="IPR008339">
    <property type="entry name" value="Dishevelled_fam"/>
</dbReference>
<dbReference type="InterPro" id="IPR003351">
    <property type="entry name" value="Dishevelled_protein_dom"/>
</dbReference>
<dbReference type="InterPro" id="IPR001158">
    <property type="entry name" value="DIX"/>
</dbReference>
<dbReference type="InterPro" id="IPR038207">
    <property type="entry name" value="DIX_dom_sf"/>
</dbReference>
<dbReference type="InterPro" id="IPR015506">
    <property type="entry name" value="Dsh/Dvl-rel"/>
</dbReference>
<dbReference type="InterPro" id="IPR008341">
    <property type="entry name" value="DVL2"/>
</dbReference>
<dbReference type="InterPro" id="IPR001478">
    <property type="entry name" value="PDZ"/>
</dbReference>
<dbReference type="InterPro" id="IPR036034">
    <property type="entry name" value="PDZ_sf"/>
</dbReference>
<dbReference type="InterPro" id="IPR029071">
    <property type="entry name" value="Ubiquitin-like_domsf"/>
</dbReference>
<dbReference type="InterPro" id="IPR036388">
    <property type="entry name" value="WH-like_DNA-bd_sf"/>
</dbReference>
<dbReference type="InterPro" id="IPR036390">
    <property type="entry name" value="WH_DNA-bd_sf"/>
</dbReference>
<dbReference type="PANTHER" id="PTHR10878">
    <property type="entry name" value="SEGMENT POLARITY PROTEIN DISHEVELLED"/>
    <property type="match status" value="1"/>
</dbReference>
<dbReference type="PANTHER" id="PTHR10878:SF8">
    <property type="entry name" value="SEGMENT POLARITY PROTEIN DISHEVELLED HOMOLOG DVL-2"/>
    <property type="match status" value="1"/>
</dbReference>
<dbReference type="Pfam" id="PF00610">
    <property type="entry name" value="DEP"/>
    <property type="match status" value="1"/>
</dbReference>
<dbReference type="Pfam" id="PF02377">
    <property type="entry name" value="Dishevelled"/>
    <property type="match status" value="1"/>
</dbReference>
<dbReference type="Pfam" id="PF00778">
    <property type="entry name" value="DIX"/>
    <property type="match status" value="1"/>
</dbReference>
<dbReference type="Pfam" id="PF12316">
    <property type="entry name" value="Dsh_C"/>
    <property type="match status" value="1"/>
</dbReference>
<dbReference type="Pfam" id="PF00595">
    <property type="entry name" value="PDZ"/>
    <property type="match status" value="1"/>
</dbReference>
<dbReference type="PRINTS" id="PR01760">
    <property type="entry name" value="DISHEVELLED"/>
</dbReference>
<dbReference type="PRINTS" id="PR01762">
    <property type="entry name" value="DISHEVELLED2"/>
</dbReference>
<dbReference type="SMART" id="SM00021">
    <property type="entry name" value="DAX"/>
    <property type="match status" value="1"/>
</dbReference>
<dbReference type="SMART" id="SM00049">
    <property type="entry name" value="DEP"/>
    <property type="match status" value="1"/>
</dbReference>
<dbReference type="SMART" id="SM00228">
    <property type="entry name" value="PDZ"/>
    <property type="match status" value="1"/>
</dbReference>
<dbReference type="SUPFAM" id="SSF50156">
    <property type="entry name" value="PDZ domain-like"/>
    <property type="match status" value="1"/>
</dbReference>
<dbReference type="SUPFAM" id="SSF54236">
    <property type="entry name" value="Ubiquitin-like"/>
    <property type="match status" value="1"/>
</dbReference>
<dbReference type="SUPFAM" id="SSF46785">
    <property type="entry name" value="Winged helix' DNA-binding domain"/>
    <property type="match status" value="1"/>
</dbReference>
<dbReference type="PROSITE" id="PS50186">
    <property type="entry name" value="DEP"/>
    <property type="match status" value="1"/>
</dbReference>
<dbReference type="PROSITE" id="PS50841">
    <property type="entry name" value="DIX"/>
    <property type="match status" value="1"/>
</dbReference>
<dbReference type="PROSITE" id="PS50106">
    <property type="entry name" value="PDZ"/>
    <property type="match status" value="1"/>
</dbReference>
<organism>
    <name type="scientific">Mus musculus</name>
    <name type="common">Mouse</name>
    <dbReference type="NCBI Taxonomy" id="10090"/>
    <lineage>
        <taxon>Eukaryota</taxon>
        <taxon>Metazoa</taxon>
        <taxon>Chordata</taxon>
        <taxon>Craniata</taxon>
        <taxon>Vertebrata</taxon>
        <taxon>Euteleostomi</taxon>
        <taxon>Mammalia</taxon>
        <taxon>Eutheria</taxon>
        <taxon>Euarchontoglires</taxon>
        <taxon>Glires</taxon>
        <taxon>Rodentia</taxon>
        <taxon>Myomorpha</taxon>
        <taxon>Muroidea</taxon>
        <taxon>Muridae</taxon>
        <taxon>Murinae</taxon>
        <taxon>Mus</taxon>
        <taxon>Mus</taxon>
    </lineage>
</organism>
<evidence type="ECO:0000250" key="1">
    <source>
        <dbReference type="UniProtKB" id="O14641"/>
    </source>
</evidence>
<evidence type="ECO:0000255" key="2">
    <source>
        <dbReference type="PROSITE-ProRule" id="PRU00066"/>
    </source>
</evidence>
<evidence type="ECO:0000255" key="3">
    <source>
        <dbReference type="PROSITE-ProRule" id="PRU00069"/>
    </source>
</evidence>
<evidence type="ECO:0000255" key="4">
    <source>
        <dbReference type="PROSITE-ProRule" id="PRU00143"/>
    </source>
</evidence>
<evidence type="ECO:0000256" key="5">
    <source>
        <dbReference type="SAM" id="MobiDB-lite"/>
    </source>
</evidence>
<evidence type="ECO:0000269" key="6">
    <source>
    </source>
</evidence>
<evidence type="ECO:0000269" key="7">
    <source>
    </source>
</evidence>
<evidence type="ECO:0000269" key="8">
    <source>
    </source>
</evidence>
<evidence type="ECO:0000269" key="9">
    <source>
    </source>
</evidence>
<evidence type="ECO:0000269" key="10">
    <source>
    </source>
</evidence>
<evidence type="ECO:0000269" key="11">
    <source>
    </source>
</evidence>
<evidence type="ECO:0000269" key="12">
    <source>
    </source>
</evidence>
<evidence type="ECO:0000269" key="13">
    <source>
    </source>
</evidence>
<evidence type="ECO:0000269" key="14">
    <source>
    </source>
</evidence>
<evidence type="ECO:0000305" key="15"/>
<evidence type="ECO:0007744" key="16">
    <source>
    </source>
</evidence>
<evidence type="ECO:0007829" key="17">
    <source>
        <dbReference type="PDB" id="3ML6"/>
    </source>
</evidence>
<protein>
    <recommendedName>
        <fullName>Segment polarity protein dishevelled homolog DVL-2</fullName>
        <shortName>Dishevelled-2</shortName>
    </recommendedName>
    <alternativeName>
        <fullName>DSH homolog 2</fullName>
    </alternativeName>
</protein>
<sequence length="736" mass="78861">MAGSSAGGGGVGETKVIYHLDEEETPYLVKIPVPAERITLGDFKSVLQRPAGAKYFFKSMDQDFGVVKEEISDDNARLPCFNGRVVSWLVSSDTPQPEVAPPAHESRTELVPPPPPLPPLPPERTSGIGDSRPPSFHPNVSSSHENLEPETETESVVSLRRDRPRRRDSSEHGAGGHRPGGPSRLERHLAGYESSSTLMTSELESTSLGDSDEDDTMSRFSSSTEQSSASRLLKRHRRRRKQRPPRMERTSSFSSVTDSTMSLNIITVTLNMEKYNFLGISIVGQSNERGDGGIYIGSIMKGGAVAADGRIEPGDMLLQVNDMNFENMSNDDAVRVLRDIVHKPGPIVLTVAKCWDPSPQAYFTLPRNEPIQPIDPAAWVSHSAALTGAFPAYPGSSSMSTITSGSSLPDGCEGRGLSVHMDMASVTKAMAAPESGLEVRDRMWLKITIPNAFLGSDVVDWLYHHVEGFPERREARKYASGLLKAGLIRHTVNKITFSEQCYYVFGDLSGGCESYLVNLSLNDNDGSSGASDQDTLAPLPGATPWPLLPTFSYQYPAPHPYSPQPPPYHELSSYTYGGGSASSQHSEGSRSSGSTRSDGGAGRTGRPEERAPESKSGSGSESELSSRGGSLRRGGEPGGTGDGGPPPSRGSTGAPPNLRALPGLHPYGAPSGMALPYNPMMVVMMPPPPPPVSTAVQPPGAPPVRDLGSVPPELTASRQSFHMAMGNPSEFFVDVM</sequence>
<reference key="1">
    <citation type="journal article" date="1996" name="Mech. Dev.">
        <title>Conservation of dishevelled structure and function between flies and mice: isolation and characterization of Dvl2.</title>
        <authorList>
            <person name="Klingensmith J."/>
            <person name="Yang Y."/>
            <person name="Axelrod J.D."/>
            <person name="Beier D.R."/>
            <person name="Perrimon N."/>
            <person name="Sussman D.J."/>
        </authorList>
    </citation>
    <scope>NUCLEOTIDE SEQUENCE [MRNA]</scope>
    <source>
        <strain>BALB/cJ</strain>
        <tissue>Brain</tissue>
    </source>
</reference>
<reference key="2">
    <citation type="journal article" date="2005" name="Science">
        <title>The transcriptional landscape of the mammalian genome.</title>
        <authorList>
            <person name="Carninci P."/>
            <person name="Kasukawa T."/>
            <person name="Katayama S."/>
            <person name="Gough J."/>
            <person name="Frith M.C."/>
            <person name="Maeda N."/>
            <person name="Oyama R."/>
            <person name="Ravasi T."/>
            <person name="Lenhard B."/>
            <person name="Wells C."/>
            <person name="Kodzius R."/>
            <person name="Shimokawa K."/>
            <person name="Bajic V.B."/>
            <person name="Brenner S.E."/>
            <person name="Batalov S."/>
            <person name="Forrest A.R."/>
            <person name="Zavolan M."/>
            <person name="Davis M.J."/>
            <person name="Wilming L.G."/>
            <person name="Aidinis V."/>
            <person name="Allen J.E."/>
            <person name="Ambesi-Impiombato A."/>
            <person name="Apweiler R."/>
            <person name="Aturaliya R.N."/>
            <person name="Bailey T.L."/>
            <person name="Bansal M."/>
            <person name="Baxter L."/>
            <person name="Beisel K.W."/>
            <person name="Bersano T."/>
            <person name="Bono H."/>
            <person name="Chalk A.M."/>
            <person name="Chiu K.P."/>
            <person name="Choudhary V."/>
            <person name="Christoffels A."/>
            <person name="Clutterbuck D.R."/>
            <person name="Crowe M.L."/>
            <person name="Dalla E."/>
            <person name="Dalrymple B.P."/>
            <person name="de Bono B."/>
            <person name="Della Gatta G."/>
            <person name="di Bernardo D."/>
            <person name="Down T."/>
            <person name="Engstrom P."/>
            <person name="Fagiolini M."/>
            <person name="Faulkner G."/>
            <person name="Fletcher C.F."/>
            <person name="Fukushima T."/>
            <person name="Furuno M."/>
            <person name="Futaki S."/>
            <person name="Gariboldi M."/>
            <person name="Georgii-Hemming P."/>
            <person name="Gingeras T.R."/>
            <person name="Gojobori T."/>
            <person name="Green R.E."/>
            <person name="Gustincich S."/>
            <person name="Harbers M."/>
            <person name="Hayashi Y."/>
            <person name="Hensch T.K."/>
            <person name="Hirokawa N."/>
            <person name="Hill D."/>
            <person name="Huminiecki L."/>
            <person name="Iacono M."/>
            <person name="Ikeo K."/>
            <person name="Iwama A."/>
            <person name="Ishikawa T."/>
            <person name="Jakt M."/>
            <person name="Kanapin A."/>
            <person name="Katoh M."/>
            <person name="Kawasawa Y."/>
            <person name="Kelso J."/>
            <person name="Kitamura H."/>
            <person name="Kitano H."/>
            <person name="Kollias G."/>
            <person name="Krishnan S.P."/>
            <person name="Kruger A."/>
            <person name="Kummerfeld S.K."/>
            <person name="Kurochkin I.V."/>
            <person name="Lareau L.F."/>
            <person name="Lazarevic D."/>
            <person name="Lipovich L."/>
            <person name="Liu J."/>
            <person name="Liuni S."/>
            <person name="McWilliam S."/>
            <person name="Madan Babu M."/>
            <person name="Madera M."/>
            <person name="Marchionni L."/>
            <person name="Matsuda H."/>
            <person name="Matsuzawa S."/>
            <person name="Miki H."/>
            <person name="Mignone F."/>
            <person name="Miyake S."/>
            <person name="Morris K."/>
            <person name="Mottagui-Tabar S."/>
            <person name="Mulder N."/>
            <person name="Nakano N."/>
            <person name="Nakauchi H."/>
            <person name="Ng P."/>
            <person name="Nilsson R."/>
            <person name="Nishiguchi S."/>
            <person name="Nishikawa S."/>
            <person name="Nori F."/>
            <person name="Ohara O."/>
            <person name="Okazaki Y."/>
            <person name="Orlando V."/>
            <person name="Pang K.C."/>
            <person name="Pavan W.J."/>
            <person name="Pavesi G."/>
            <person name="Pesole G."/>
            <person name="Petrovsky N."/>
            <person name="Piazza S."/>
            <person name="Reed J."/>
            <person name="Reid J.F."/>
            <person name="Ring B.Z."/>
            <person name="Ringwald M."/>
            <person name="Rost B."/>
            <person name="Ruan Y."/>
            <person name="Salzberg S.L."/>
            <person name="Sandelin A."/>
            <person name="Schneider C."/>
            <person name="Schoenbach C."/>
            <person name="Sekiguchi K."/>
            <person name="Semple C.A."/>
            <person name="Seno S."/>
            <person name="Sessa L."/>
            <person name="Sheng Y."/>
            <person name="Shibata Y."/>
            <person name="Shimada H."/>
            <person name="Shimada K."/>
            <person name="Silva D."/>
            <person name="Sinclair B."/>
            <person name="Sperling S."/>
            <person name="Stupka E."/>
            <person name="Sugiura K."/>
            <person name="Sultana R."/>
            <person name="Takenaka Y."/>
            <person name="Taki K."/>
            <person name="Tammoja K."/>
            <person name="Tan S.L."/>
            <person name="Tang S."/>
            <person name="Taylor M.S."/>
            <person name="Tegner J."/>
            <person name="Teichmann S.A."/>
            <person name="Ueda H.R."/>
            <person name="van Nimwegen E."/>
            <person name="Verardo R."/>
            <person name="Wei C.L."/>
            <person name="Yagi K."/>
            <person name="Yamanishi H."/>
            <person name="Zabarovsky E."/>
            <person name="Zhu S."/>
            <person name="Zimmer A."/>
            <person name="Hide W."/>
            <person name="Bult C."/>
            <person name="Grimmond S.M."/>
            <person name="Teasdale R.D."/>
            <person name="Liu E.T."/>
            <person name="Brusic V."/>
            <person name="Quackenbush J."/>
            <person name="Wahlestedt C."/>
            <person name="Mattick J.S."/>
            <person name="Hume D.A."/>
            <person name="Kai C."/>
            <person name="Sasaki D."/>
            <person name="Tomaru Y."/>
            <person name="Fukuda S."/>
            <person name="Kanamori-Katayama M."/>
            <person name="Suzuki M."/>
            <person name="Aoki J."/>
            <person name="Arakawa T."/>
            <person name="Iida J."/>
            <person name="Imamura K."/>
            <person name="Itoh M."/>
            <person name="Kato T."/>
            <person name="Kawaji H."/>
            <person name="Kawagashira N."/>
            <person name="Kawashima T."/>
            <person name="Kojima M."/>
            <person name="Kondo S."/>
            <person name="Konno H."/>
            <person name="Nakano K."/>
            <person name="Ninomiya N."/>
            <person name="Nishio T."/>
            <person name="Okada M."/>
            <person name="Plessy C."/>
            <person name="Shibata K."/>
            <person name="Shiraki T."/>
            <person name="Suzuki S."/>
            <person name="Tagami M."/>
            <person name="Waki K."/>
            <person name="Watahiki A."/>
            <person name="Okamura-Oho Y."/>
            <person name="Suzuki H."/>
            <person name="Kawai J."/>
            <person name="Hayashizaki Y."/>
        </authorList>
    </citation>
    <scope>NUCLEOTIDE SEQUENCE [LARGE SCALE MRNA]</scope>
    <source>
        <strain>C57BL/6J</strain>
        <tissue>Amnion</tissue>
        <tissue>Kidney</tissue>
    </source>
</reference>
<reference key="3">
    <citation type="journal article" date="2009" name="PLoS Biol.">
        <title>Lineage-specific biology revealed by a finished genome assembly of the mouse.</title>
        <authorList>
            <person name="Church D.M."/>
            <person name="Goodstadt L."/>
            <person name="Hillier L.W."/>
            <person name="Zody M.C."/>
            <person name="Goldstein S."/>
            <person name="She X."/>
            <person name="Bult C.J."/>
            <person name="Agarwala R."/>
            <person name="Cherry J.L."/>
            <person name="DiCuccio M."/>
            <person name="Hlavina W."/>
            <person name="Kapustin Y."/>
            <person name="Meric P."/>
            <person name="Maglott D."/>
            <person name="Birtle Z."/>
            <person name="Marques A.C."/>
            <person name="Graves T."/>
            <person name="Zhou S."/>
            <person name="Teague B."/>
            <person name="Potamousis K."/>
            <person name="Churas C."/>
            <person name="Place M."/>
            <person name="Herschleb J."/>
            <person name="Runnheim R."/>
            <person name="Forrest D."/>
            <person name="Amos-Landgraf J."/>
            <person name="Schwartz D.C."/>
            <person name="Cheng Z."/>
            <person name="Lindblad-Toh K."/>
            <person name="Eichler E.E."/>
            <person name="Ponting C.P."/>
        </authorList>
    </citation>
    <scope>NUCLEOTIDE SEQUENCE [LARGE SCALE GENOMIC DNA]</scope>
    <source>
        <strain>C57BL/6J</strain>
    </source>
</reference>
<reference key="4">
    <citation type="submission" date="2005-07" db="EMBL/GenBank/DDBJ databases">
        <authorList>
            <person name="Mural R.J."/>
            <person name="Adams M.D."/>
            <person name="Myers E.W."/>
            <person name="Smith H.O."/>
            <person name="Venter J.C."/>
        </authorList>
    </citation>
    <scope>NUCLEOTIDE SEQUENCE [LARGE SCALE GENOMIC DNA]</scope>
</reference>
<reference key="5">
    <citation type="journal article" date="2004" name="Genome Res.">
        <title>The status, quality, and expansion of the NIH full-length cDNA project: the Mammalian Gene Collection (MGC).</title>
        <authorList>
            <consortium name="The MGC Project Team"/>
        </authorList>
    </citation>
    <scope>NUCLEOTIDE SEQUENCE [LARGE SCALE MRNA]</scope>
    <source>
        <strain>C57BL/6J</strain>
    </source>
</reference>
<reference key="6">
    <citation type="journal article" date="2004" name="J. Biol. Chem.">
        <title>The DIX domain protein coiled-coil-DIX1 inhibits c-Jun N-terminal kinase activation by Axin and dishevelled through distinct mechanisms.</title>
        <authorList>
            <person name="Wong C.K."/>
            <person name="Luo W."/>
            <person name="Deng Y."/>
            <person name="Zou H."/>
            <person name="Ye Z."/>
            <person name="Lin S.-C."/>
        </authorList>
    </citation>
    <scope>INTERACTION WITH DIXDC1 AND RAC</scope>
</reference>
<reference key="7">
    <citation type="journal article" date="2004" name="J. Biol. Chem.">
        <title>Independent mutations in mouse Vangl2 that cause neural tube defects in looptail mice impair interaction with members of the Dishevelled family.</title>
        <authorList>
            <person name="Torban E."/>
            <person name="Wang H.-J."/>
            <person name="Groulx N."/>
            <person name="Gros P."/>
        </authorList>
    </citation>
    <scope>INTERACTION WITH VANGL1 AND VANGL2</scope>
</reference>
<reference key="8">
    <citation type="journal article" date="2007" name="Dev. Cell">
        <title>Association of Dishevelled with the clathrin AP-2 adaptor is required for Frizzled endocytosis and planar cell polarity signaling.</title>
        <authorList>
            <person name="Yu A."/>
            <person name="Rual J.F."/>
            <person name="Tamai K."/>
            <person name="Harada Y."/>
            <person name="Vidal M."/>
            <person name="He X."/>
            <person name="Kirchhausen T."/>
        </authorList>
    </citation>
    <scope>FUNCTION</scope>
    <scope>SUBCELLULAR LOCATION</scope>
    <scope>INTERACTION WITH THE AP-2 COMPLEX</scope>
</reference>
<reference key="9">
    <citation type="journal article" date="2010" name="Cell">
        <title>A tissue-specific atlas of mouse protein phosphorylation and expression.</title>
        <authorList>
            <person name="Huttlin E.L."/>
            <person name="Jedrychowski M.P."/>
            <person name="Elias J.E."/>
            <person name="Goswami T."/>
            <person name="Rad R."/>
            <person name="Beausoleil S.A."/>
            <person name="Villen J."/>
            <person name="Haas W."/>
            <person name="Sowa M.E."/>
            <person name="Gygi S.P."/>
        </authorList>
    </citation>
    <scope>PHOSPHORYLATION [LARGE SCALE ANALYSIS] AT SER-211</scope>
    <scope>IDENTIFICATION BY MASS SPECTROMETRY [LARGE SCALE ANALYSIS]</scope>
    <source>
        <tissue>Testis</tissue>
    </source>
</reference>
<reference key="10">
    <citation type="journal article" date="2011" name="J. Biol. Chem.">
        <title>Molecular basis of Wnt activation via the DIX-domain protein Ccd1.</title>
        <authorList>
            <person name="Liu Y.T."/>
            <person name="Dan Q.J."/>
            <person name="Wang J."/>
            <person name="Feng Y."/>
            <person name="Chen L."/>
            <person name="Liang J."/>
            <person name="Li Q."/>
            <person name="Lin S.C."/>
            <person name="Wang Z.X."/>
            <person name="Wu J.W."/>
        </authorList>
    </citation>
    <scope>FUNCTION</scope>
    <scope>INTERACTION WITH DIXDC1</scope>
    <scope>SUBUNIT</scope>
    <scope>SUBCELLULAR LOCATION</scope>
    <scope>MUTAGENESIS OF LYS-15; ILE-17; TYR-27; PHE-56; ASP-61; ASP-63; GLY-65; VAL-66 AND LYS-68</scope>
    <scope>DOMAIN</scope>
</reference>
<reference key="11">
    <citation type="journal article" date="2013" name="Nature">
        <title>The linear ubiquitin-specific deubiquitinase gumby regulates angiogenesis.</title>
        <authorList>
            <person name="Rivkin E."/>
            <person name="Almeida S.M."/>
            <person name="Ceccarelli D.F."/>
            <person name="Juang Y.C."/>
            <person name="Maclean T.A."/>
            <person name="Srikumar T."/>
            <person name="Huang H."/>
            <person name="Dunham W.H."/>
            <person name="Fukumura R."/>
            <person name="Xie G."/>
            <person name="Gondo Y."/>
            <person name="Raught B."/>
            <person name="Gingras A.C."/>
            <person name="Sicheri F."/>
            <person name="Cordes S.P."/>
        </authorList>
    </citation>
    <scope>INTERACTION WITH FAM105B</scope>
</reference>
<reference key="12">
    <citation type="journal article" date="2015" name="Nat. Commun.">
        <title>ERK7 regulates ciliogenesis by phosphorylating the actin regulator CapZIP in cooperation with Dishevelled.</title>
        <authorList>
            <person name="Miyatake K."/>
            <person name="Kusakabe M."/>
            <person name="Takahashi C."/>
            <person name="Nishida E."/>
        </authorList>
    </citation>
    <scope>INTERACTION WITH MAPK15</scope>
</reference>
<reference key="13">
    <citation type="journal article" date="2016" name="Nat. Cell Biol.">
        <title>The polycystin complex mediates Wnt/Ca(2+) signalling.</title>
        <authorList>
            <person name="Kim S."/>
            <person name="Nie H."/>
            <person name="Nesin V."/>
            <person name="Tran U."/>
            <person name="Outeda P."/>
            <person name="Bai C.X."/>
            <person name="Keeling J."/>
            <person name="Maskey D."/>
            <person name="Watnick T."/>
            <person name="Wessely O."/>
            <person name="Tsiokas L."/>
        </authorList>
    </citation>
    <scope>INTERACTION WITH PKD1</scope>
</reference>
<reference key="14">
    <citation type="journal article" date="2019" name="Science">
        <title>LMBR1L regulates lymphopoiesis through Wnt/beta-catenin signaling.</title>
        <authorList>
            <person name="Choi J.H."/>
            <person name="Zhong X."/>
            <person name="McAlpine W."/>
            <person name="Liao T.C."/>
            <person name="Zhang D."/>
            <person name="Fang B."/>
            <person name="Russell J."/>
            <person name="Ludwig S."/>
            <person name="Nair-Gill E."/>
            <person name="Zhang Z."/>
            <person name="Wang K.W."/>
            <person name="Misawa T."/>
            <person name="Zhan X."/>
            <person name="Choi M."/>
            <person name="Wang T."/>
            <person name="Li X."/>
            <person name="Tang M."/>
            <person name="Sun Q."/>
            <person name="Yu L."/>
            <person name="Murray A.R."/>
            <person name="Moresco E.M.Y."/>
            <person name="Beutler B."/>
        </authorList>
    </citation>
    <scope>INTERACTION WITH LMBR1L</scope>
</reference>
<reference key="15">
    <citation type="journal article" date="2010" name="Structure">
        <title>Structural analysis of the interaction between Dishevelled2 and clathrin AP-2 adaptor, a critical step in noncanonical Wnt signaling.</title>
        <authorList>
            <person name="Yu A."/>
            <person name="Xing Y."/>
            <person name="Harrison S.C."/>
            <person name="Kirchhausen T."/>
        </authorList>
    </citation>
    <scope>X-RAY CRYSTALLOGRAPHY (3.5 ANGSTROMS) OF 417-510 IN COMPLEX WITH AP2M1</scope>
    <scope>FUNCTION</scope>
    <scope>SUBUNIT</scope>
    <scope>SUBCELLULAR LOCATION</scope>
</reference>
<name>DVL2_MOUSE</name>
<gene>
    <name type="primary">Dvl2</name>
</gene>
<accession>Q60838</accession>
<accession>Q7TN14</accession>
<comment type="function">
    <text evidence="8 9 10">Plays a role in the signal transduction pathways mediated by multiple Wnt genes. Participates both in canonical and non-canonical Wnt signaling by binding to the cytoplasmic C-terminus of frizzled family members and transducing the Wnt signal to down-stream effectors. Promotes internalization and degradation of frizzled proteins upon Wnt signaling.</text>
</comment>
<comment type="subunit">
    <text evidence="1 6 7 8 9 10 11 12 13 14">Interacts through its PDZ domain with the C-terminal regions of VANGL1 and VANGL2. Interacts with Rac. Interacts with ARRB1; the interaction is enhanced by phosphorylation of DVL1 (By similarity). Can form large oligomers (via DIX domain). Interacts (via DIX domain) with DIXDC1 (via DIX domain). Interacts (via DEP domain) with AP2M1 and the AP-2 complex. Interacts with FAM105B/otulin. Interacts with DCDC2. Interacts (when phosphorylated) with FOXK1 and FOXK2; the interaction induces DVL2 nuclear translocation (By similarity). Interacts with MAPK15 (PubMed:25823377). Interacts with PKD1 (via extracellular domain) (PubMed:27214281). Interacts with LMBR1L (PubMed:31073040).</text>
</comment>
<comment type="interaction">
    <interactant intactId="EBI-641940">
        <id>Q60838</id>
    </interactant>
    <interactant intactId="EBI-15605686">
        <id>Q69ZU8-1</id>
        <label>Ankrd6</label>
    </interactant>
    <organismsDiffer>false</organismsDiffer>
    <experiments>3</experiments>
</comment>
<comment type="interaction">
    <interactant intactId="EBI-641940">
        <id>Q60838</id>
    </interactant>
    <interactant intactId="EBI-3870250">
        <id>Q8R4A3</id>
        <label>Dact1</label>
    </interactant>
    <organismsDiffer>false</organismsDiffer>
    <experiments>3</experiments>
</comment>
<comment type="interaction">
    <interactant intactId="EBI-641940">
        <id>Q60838</id>
    </interactant>
    <interactant intactId="EBI-641940">
        <id>Q60838</id>
        <label>Dvl2</label>
    </interactant>
    <organismsDiffer>false</organismsDiffer>
    <experiments>7</experiments>
</comment>
<comment type="interaction">
    <interactant intactId="EBI-641940">
        <id>Q60838</id>
    </interactant>
    <interactant intactId="EBI-1538450">
        <id>Q61062</id>
        <label>Dvl3</label>
    </interactant>
    <organismsDiffer>false</organismsDiffer>
    <experiments>3</experiments>
</comment>
<comment type="interaction">
    <interactant intactId="EBI-641940">
        <id>Q60838</id>
    </interactant>
    <interactant intactId="EBI-1750708">
        <id>Q80Z96</id>
        <label>Vangl1</label>
    </interactant>
    <organismsDiffer>false</organismsDiffer>
    <experiments>4</experiments>
</comment>
<comment type="interaction">
    <interactant intactId="EBI-641940">
        <id>Q60838</id>
    </interactant>
    <interactant intactId="EBI-1750744">
        <id>Q91ZD4</id>
        <label>Vangl2</label>
    </interactant>
    <organismsDiffer>false</organismsDiffer>
    <experiments>4</experiments>
</comment>
<comment type="interaction">
    <interactant intactId="EBI-641940">
        <id>Q60838</id>
    </interactant>
    <interactant intactId="EBI-297693">
        <id>P84092</id>
        <label>Ap2m1</label>
    </interactant>
    <organismsDiffer>true</organismsDiffer>
    <experiments>4</experiments>
</comment>
<comment type="interaction">
    <interactant intactId="EBI-641940">
        <id>Q60838</id>
    </interactant>
    <interactant intactId="EBI-751621">
        <id>P48730</id>
        <label>CSNK1D</label>
    </interactant>
    <organismsDiffer>true</organismsDiffer>
    <experiments>2</experiments>
</comment>
<comment type="interaction">
    <interactant intactId="EBI-641940">
        <id>Q60838</id>
    </interactant>
    <interactant intactId="EBI-749343">
        <id>P49674</id>
        <label>CSNK1E</label>
    </interactant>
    <organismsDiffer>true</organismsDiffer>
    <experiments>3</experiments>
</comment>
<comment type="interaction">
    <interactant intactId="EBI-641940">
        <id>Q60838</id>
    </interactant>
    <interactant intactId="EBI-15677700">
        <id>Q9Y4D1-1</id>
        <label>DAAM1</label>
    </interactant>
    <organismsDiffer>true</organismsDiffer>
    <experiments>4</experiments>
</comment>
<comment type="interaction">
    <interactant intactId="EBI-641940">
        <id>Q60838</id>
    </interactant>
    <interactant intactId="EBI-1104700">
        <id>Q155Q3</id>
        <label>DIXDC1</label>
    </interactant>
    <organismsDiffer>true</organismsDiffer>
    <experiments>4</experiments>
</comment>
<comment type="interaction">
    <interactant intactId="EBI-641940">
        <id>Q60838</id>
    </interactant>
    <interactant intactId="EBI-476768">
        <id>P53350</id>
        <label>PLK1</label>
    </interactant>
    <organismsDiffer>true</organismsDiffer>
    <experiments>12</experiments>
</comment>
<comment type="interaction">
    <interactant intactId="EBI-641940">
        <id>Q60838</id>
    </interactant>
    <interactant intactId="EBI-4320739">
        <id>Q9NZC7</id>
        <label>WWOX</label>
    </interactant>
    <organismsDiffer>true</organismsDiffer>
    <experiments>2</experiments>
</comment>
<comment type="subcellular location">
    <subcellularLocation>
        <location evidence="8 9">Cell membrane</location>
        <topology evidence="9">Peripheral membrane protein</topology>
        <orientation evidence="9">Cytoplasmic side</orientation>
    </subcellularLocation>
    <subcellularLocation>
        <location evidence="10">Cytoplasm</location>
        <location evidence="10">Cytosol</location>
    </subcellularLocation>
    <subcellularLocation>
        <location evidence="8 10">Cytoplasmic vesicle</location>
    </subcellularLocation>
    <subcellularLocation>
        <location evidence="1">Nucleus</location>
    </subcellularLocation>
    <text evidence="1 10">Localizes at the cell membrane upon interaction with frizzled family members and promotes their internalization (PubMed:21189423). Localizes to cytoplasmic puncta. Interaction with FOXK1 and FOXK2 induces nuclear translocation (By similarity).</text>
</comment>
<comment type="tissue specificity">
    <text>Ubiquitous.</text>
</comment>
<comment type="domain">
    <text evidence="10">The DIX domain mediates homooligomerization.</text>
</comment>
<comment type="PTM">
    <text evidence="1">Phosphorylated by CSNK1D. WNT3A induces DVL2 phosphorylation by CSNK1E and MARK kinases.</text>
</comment>
<comment type="PTM">
    <text evidence="1">Ubiquitinated via 'Lys-63'-linked polyubiquitin chains; leading to its autophagy-mediated degradation.</text>
</comment>
<comment type="similarity">
    <text evidence="15">Belongs to the DSH family.</text>
</comment>
<keyword id="KW-0002">3D-structure</keyword>
<keyword id="KW-1003">Cell membrane</keyword>
<keyword id="KW-0963">Cytoplasm</keyword>
<keyword id="KW-0968">Cytoplasmic vesicle</keyword>
<keyword id="KW-0217">Developmental protein</keyword>
<keyword id="KW-1017">Isopeptide bond</keyword>
<keyword id="KW-0472">Membrane</keyword>
<keyword id="KW-0539">Nucleus</keyword>
<keyword id="KW-0597">Phosphoprotein</keyword>
<keyword id="KW-1185">Reference proteome</keyword>
<keyword id="KW-0832">Ubl conjugation</keyword>
<keyword id="KW-0879">Wnt signaling pathway</keyword>
<feature type="chain" id="PRO_0000145747" description="Segment polarity protein dishevelled homolog DVL-2">
    <location>
        <begin position="1"/>
        <end position="736"/>
    </location>
</feature>
<feature type="domain" description="DIX" evidence="3">
    <location>
        <begin position="11"/>
        <end position="93"/>
    </location>
</feature>
<feature type="domain" description="PDZ" evidence="4">
    <location>
        <begin position="267"/>
        <end position="339"/>
    </location>
</feature>
<feature type="domain" description="DEP" evidence="2">
    <location>
        <begin position="433"/>
        <end position="507"/>
    </location>
</feature>
<feature type="region of interest" description="Disordered" evidence="5">
    <location>
        <begin position="93"/>
        <end position="255"/>
    </location>
</feature>
<feature type="region of interest" description="Disordered" evidence="5">
    <location>
        <begin position="558"/>
        <end position="665"/>
    </location>
</feature>
<feature type="compositionally biased region" description="Pro residues" evidence="5">
    <location>
        <begin position="111"/>
        <end position="122"/>
    </location>
</feature>
<feature type="compositionally biased region" description="Basic and acidic residues" evidence="5">
    <location>
        <begin position="159"/>
        <end position="171"/>
    </location>
</feature>
<feature type="compositionally biased region" description="Low complexity" evidence="5">
    <location>
        <begin position="193"/>
        <end position="208"/>
    </location>
</feature>
<feature type="compositionally biased region" description="Polar residues" evidence="5">
    <location>
        <begin position="218"/>
        <end position="230"/>
    </location>
</feature>
<feature type="compositionally biased region" description="Basic residues" evidence="5">
    <location>
        <begin position="232"/>
        <end position="244"/>
    </location>
</feature>
<feature type="compositionally biased region" description="Pro residues" evidence="5">
    <location>
        <begin position="558"/>
        <end position="568"/>
    </location>
</feature>
<feature type="compositionally biased region" description="Low complexity" evidence="5">
    <location>
        <begin position="581"/>
        <end position="598"/>
    </location>
</feature>
<feature type="compositionally biased region" description="Low complexity" evidence="5">
    <location>
        <begin position="614"/>
        <end position="629"/>
    </location>
</feature>
<feature type="modified residue" description="Phosphoserine" evidence="16">
    <location>
        <position position="211"/>
    </location>
</feature>
<feature type="mutagenesis site" description="Reduces oligomerization. Reduces activation of Wnt signaling." evidence="10">
    <original>K</original>
    <variation>A</variation>
    <location>
        <position position="15"/>
    </location>
</feature>
<feature type="mutagenesis site" description="Reduces oligomerization. Abolishes interaction with DIXDC1. Reduces activation of Wnt signaling." evidence="10">
    <original>I</original>
    <variation>A</variation>
    <location>
        <position position="17"/>
    </location>
</feature>
<feature type="mutagenesis site" description="Loss of oligomerization. Abolishes interaction with DIXDC1. Abolishes activation of Wnt signaling." evidence="10">
    <original>Y</original>
    <variation>D</variation>
    <location>
        <position position="27"/>
    </location>
</feature>
<feature type="mutagenesis site" description="Reduces oligomerization. Strongly reduced activation of Wnt signaling." evidence="10">
    <original>F</original>
    <variation>H</variation>
    <location>
        <position position="56"/>
    </location>
</feature>
<feature type="mutagenesis site" description="Reduces oligomerization. Reduces activation of Wnt signaling." evidence="10">
    <original>D</original>
    <variation>A</variation>
    <location>
        <position position="61"/>
    </location>
</feature>
<feature type="mutagenesis site" description="Reduces oligomerization. Reduces activation of Wnt signaling." evidence="10">
    <original>D</original>
    <variation>A</variation>
    <location>
        <position position="63"/>
    </location>
</feature>
<feature type="mutagenesis site" description="Reduces oligomerization. Reduces activation of Wnt signaling.">
    <original>F</original>
    <variation>A</variation>
    <location>
        <position position="64"/>
    </location>
</feature>
<feature type="mutagenesis site" description="Loss of oligomerization. Abolishes activation of Wnt signaling." evidence="10">
    <original>G</original>
    <variation>D</variation>
    <location>
        <position position="65"/>
    </location>
</feature>
<feature type="mutagenesis site" description="Reduces oligomerization. Reduces activation of Wnt signaling." evidence="10">
    <original>V</original>
    <variation>D</variation>
    <location>
        <position position="66"/>
    </location>
</feature>
<feature type="mutagenesis site" description="Loss of oligomerization. Strongly reduced activation of Wnt signaling." evidence="10">
    <original>K</original>
    <variation>A</variation>
    <location>
        <position position="68"/>
    </location>
</feature>
<feature type="mutagenesis site" description="Strongly reduced interaction with DIXDC1.">
    <original>R</original>
    <variation>A</variation>
    <location>
        <position position="84"/>
    </location>
</feature>
<feature type="sequence conflict" description="In Ref. 1; AAC52827." evidence="15" ref="1">
    <original>D</original>
    <variation>G</variation>
    <location>
        <position position="356"/>
    </location>
</feature>
<feature type="helix" evidence="17">
    <location>
        <begin position="423"/>
        <end position="431"/>
    </location>
</feature>
<feature type="strand" evidence="17">
    <location>
        <begin position="435"/>
        <end position="437"/>
    </location>
</feature>
<feature type="strand" evidence="17">
    <location>
        <begin position="440"/>
        <end position="442"/>
    </location>
</feature>
<feature type="strand" evidence="17">
    <location>
        <begin position="449"/>
        <end position="454"/>
    </location>
</feature>
<feature type="helix" evidence="17">
    <location>
        <begin position="455"/>
        <end position="464"/>
    </location>
</feature>
<feature type="helix" evidence="17">
    <location>
        <begin position="472"/>
        <end position="485"/>
    </location>
</feature>
<feature type="strand" evidence="17">
    <location>
        <begin position="486"/>
        <end position="493"/>
    </location>
</feature>
<feature type="strand" evidence="17">
    <location>
        <begin position="499"/>
        <end position="505"/>
    </location>
</feature>
<proteinExistence type="evidence at protein level"/>